<gene>
    <name type="primary">ydjG</name>
    <name type="ordered locus">b1771</name>
    <name type="ordered locus">JW1760</name>
</gene>
<organism>
    <name type="scientific">Escherichia coli (strain K12)</name>
    <dbReference type="NCBI Taxonomy" id="83333"/>
    <lineage>
        <taxon>Bacteria</taxon>
        <taxon>Pseudomonadati</taxon>
        <taxon>Pseudomonadota</taxon>
        <taxon>Gammaproteobacteria</taxon>
        <taxon>Enterobacterales</taxon>
        <taxon>Enterobacteriaceae</taxon>
        <taxon>Escherichia</taxon>
    </lineage>
</organism>
<dbReference type="EC" id="1.1.1.-" evidence="2"/>
<dbReference type="EMBL" id="U00096">
    <property type="protein sequence ID" value="AAC74841.1"/>
    <property type="molecule type" value="Genomic_DNA"/>
</dbReference>
<dbReference type="EMBL" id="AP009048">
    <property type="protein sequence ID" value="BAA15562.1"/>
    <property type="molecule type" value="Genomic_DNA"/>
</dbReference>
<dbReference type="PIR" id="C64937">
    <property type="entry name" value="C64937"/>
</dbReference>
<dbReference type="RefSeq" id="NP_416285.1">
    <property type="nucleotide sequence ID" value="NC_000913.3"/>
</dbReference>
<dbReference type="RefSeq" id="WP_000723710.1">
    <property type="nucleotide sequence ID" value="NZ_SSZK01000001.1"/>
</dbReference>
<dbReference type="SMR" id="P77256"/>
<dbReference type="BioGRID" id="4259143">
    <property type="interactions" value="14"/>
</dbReference>
<dbReference type="FunCoup" id="P77256">
    <property type="interactions" value="286"/>
</dbReference>
<dbReference type="IntAct" id="P77256">
    <property type="interactions" value="3"/>
</dbReference>
<dbReference type="STRING" id="511145.b1771"/>
<dbReference type="PaxDb" id="511145-b1771"/>
<dbReference type="EnsemblBacteria" id="AAC74841">
    <property type="protein sequence ID" value="AAC74841"/>
    <property type="gene ID" value="b1771"/>
</dbReference>
<dbReference type="GeneID" id="75203077"/>
<dbReference type="GeneID" id="946283"/>
<dbReference type="KEGG" id="ecj:JW1760"/>
<dbReference type="KEGG" id="eco:b1771"/>
<dbReference type="KEGG" id="ecoc:C3026_10110"/>
<dbReference type="PATRIC" id="fig|1411691.4.peg.483"/>
<dbReference type="EchoBASE" id="EB3256"/>
<dbReference type="eggNOG" id="COG0667">
    <property type="taxonomic scope" value="Bacteria"/>
</dbReference>
<dbReference type="HOGENOM" id="CLU_023205_2_3_6"/>
<dbReference type="InParanoid" id="P77256"/>
<dbReference type="OMA" id="TKFGMDM"/>
<dbReference type="OrthoDB" id="9772407at2"/>
<dbReference type="PhylomeDB" id="P77256"/>
<dbReference type="BioCyc" id="EcoCyc:G6958-MONOMER"/>
<dbReference type="BioCyc" id="MetaCyc:G6958-MONOMER"/>
<dbReference type="SABIO-RK" id="P77256"/>
<dbReference type="PRO" id="PR:P77256"/>
<dbReference type="Proteomes" id="UP000000625">
    <property type="component" value="Chromosome"/>
</dbReference>
<dbReference type="GO" id="GO:0005829">
    <property type="term" value="C:cytosol"/>
    <property type="evidence" value="ECO:0000318"/>
    <property type="project" value="GO_Central"/>
</dbReference>
<dbReference type="GO" id="GO:0019170">
    <property type="term" value="F:methylglyoxal reductase (NADH) activity"/>
    <property type="evidence" value="ECO:0000314"/>
    <property type="project" value="EcoCyc"/>
</dbReference>
<dbReference type="CDD" id="cd19149">
    <property type="entry name" value="AKR_AKR11B2"/>
    <property type="match status" value="1"/>
</dbReference>
<dbReference type="FunFam" id="3.20.20.100:FF:000022">
    <property type="entry name" value="Oxidoreductase, aldo/keto reductase family"/>
    <property type="match status" value="1"/>
</dbReference>
<dbReference type="Gene3D" id="3.20.20.100">
    <property type="entry name" value="NADP-dependent oxidoreductase domain"/>
    <property type="match status" value="1"/>
</dbReference>
<dbReference type="InterPro" id="IPR020471">
    <property type="entry name" value="AKR"/>
</dbReference>
<dbReference type="InterPro" id="IPR050523">
    <property type="entry name" value="AKR_Detox_Biosynth"/>
</dbReference>
<dbReference type="InterPro" id="IPR023210">
    <property type="entry name" value="NADP_OxRdtase_dom"/>
</dbReference>
<dbReference type="InterPro" id="IPR036812">
    <property type="entry name" value="NADP_OxRdtase_dom_sf"/>
</dbReference>
<dbReference type="PANTHER" id="PTHR43364:SF4">
    <property type="entry name" value="NAD(P)-LINKED OXIDOREDUCTASE SUPERFAMILY PROTEIN"/>
    <property type="match status" value="1"/>
</dbReference>
<dbReference type="PANTHER" id="PTHR43364">
    <property type="entry name" value="NADH-SPECIFIC METHYLGLYOXAL REDUCTASE-RELATED"/>
    <property type="match status" value="1"/>
</dbReference>
<dbReference type="Pfam" id="PF00248">
    <property type="entry name" value="Aldo_ket_red"/>
    <property type="match status" value="1"/>
</dbReference>
<dbReference type="PRINTS" id="PR00069">
    <property type="entry name" value="ALDKETRDTASE"/>
</dbReference>
<dbReference type="SUPFAM" id="SSF51430">
    <property type="entry name" value="NAD(P)-linked oxidoreductase"/>
    <property type="match status" value="1"/>
</dbReference>
<feature type="chain" id="PRO_0000070395" description="NADH-specific methylglyoxal reductase">
    <location>
        <begin position="1"/>
        <end position="326"/>
    </location>
</feature>
<feature type="active site" description="Proton donor" evidence="1">
    <location>
        <position position="59"/>
    </location>
</feature>
<feature type="binding site" evidence="1">
    <location>
        <begin position="20"/>
        <end position="21"/>
    </location>
    <ligand>
        <name>NAD(+)</name>
        <dbReference type="ChEBI" id="CHEBI:57540"/>
    </ligand>
</feature>
<feature type="binding site" evidence="1">
    <location>
        <position position="54"/>
    </location>
    <ligand>
        <name>NAD(+)</name>
        <dbReference type="ChEBI" id="CHEBI:57540"/>
    </ligand>
</feature>
<feature type="binding site" evidence="1">
    <location>
        <position position="189"/>
    </location>
    <ligand>
        <name>NAD(+)</name>
        <dbReference type="ChEBI" id="CHEBI:57540"/>
    </ligand>
</feature>
<feature type="binding site" evidence="1">
    <location>
        <begin position="217"/>
        <end position="222"/>
    </location>
    <ligand>
        <name>NAD(+)</name>
        <dbReference type="ChEBI" id="CHEBI:57540"/>
    </ligand>
</feature>
<feature type="binding site" evidence="1">
    <location>
        <position position="291"/>
    </location>
    <ligand>
        <name>NAD(+)</name>
        <dbReference type="ChEBI" id="CHEBI:57540"/>
    </ligand>
</feature>
<feature type="binding site" evidence="1">
    <location>
        <position position="297"/>
    </location>
    <ligand>
        <name>NAD(+)</name>
        <dbReference type="ChEBI" id="CHEBI:57540"/>
    </ligand>
</feature>
<feature type="site" description="Lowers pKa of active site Tyr" evidence="1">
    <location>
        <position position="85"/>
    </location>
</feature>
<feature type="mutagenesis site" description="Converts the protein into an enzyme with dual specificity, i.e. that is able to use both NADPH and NADH as cosubstrates." evidence="2">
    <original>D</original>
    <variation>A</variation>
    <variation>E</variation>
    <location>
        <position position="232"/>
    </location>
</feature>
<keyword id="KW-0520">NAD</keyword>
<keyword id="KW-0560">Oxidoreductase</keyword>
<keyword id="KW-1185">Reference proteome</keyword>
<evidence type="ECO:0000250" key="1">
    <source>
        <dbReference type="UniProtKB" id="P80874"/>
    </source>
</evidence>
<evidence type="ECO:0000269" key="2">
    <source>
    </source>
</evidence>
<evidence type="ECO:0000269" key="3">
    <source>
    </source>
</evidence>
<evidence type="ECO:0000269" key="4">
    <source>
    </source>
</evidence>
<evidence type="ECO:0000303" key="5">
    <source>
    </source>
</evidence>
<evidence type="ECO:0000305" key="6">
    <source>
    </source>
</evidence>
<reference key="1">
    <citation type="journal article" date="1996" name="DNA Res.">
        <title>A 570-kb DNA sequence of the Escherichia coli K-12 genome corresponding to the 28.0-40.1 min region on the linkage map.</title>
        <authorList>
            <person name="Aiba H."/>
            <person name="Baba T."/>
            <person name="Fujita K."/>
            <person name="Hayashi K."/>
            <person name="Inada T."/>
            <person name="Isono K."/>
            <person name="Itoh T."/>
            <person name="Kasai H."/>
            <person name="Kashimoto K."/>
            <person name="Kimura S."/>
            <person name="Kitakawa M."/>
            <person name="Kitagawa M."/>
            <person name="Makino K."/>
            <person name="Miki T."/>
            <person name="Mizobuchi K."/>
            <person name="Mori H."/>
            <person name="Mori T."/>
            <person name="Motomura K."/>
            <person name="Nakade S."/>
            <person name="Nakamura Y."/>
            <person name="Nashimoto H."/>
            <person name="Nishio Y."/>
            <person name="Oshima T."/>
            <person name="Saito N."/>
            <person name="Sampei G."/>
            <person name="Seki Y."/>
            <person name="Sivasundaram S."/>
            <person name="Tagami H."/>
            <person name="Takeda J."/>
            <person name="Takemoto K."/>
            <person name="Takeuchi Y."/>
            <person name="Wada C."/>
            <person name="Yamamoto Y."/>
            <person name="Horiuchi T."/>
        </authorList>
    </citation>
    <scope>NUCLEOTIDE SEQUENCE [LARGE SCALE GENOMIC DNA]</scope>
    <source>
        <strain>K12 / W3110 / ATCC 27325 / DSM 5911</strain>
    </source>
</reference>
<reference key="2">
    <citation type="journal article" date="1997" name="Science">
        <title>The complete genome sequence of Escherichia coli K-12.</title>
        <authorList>
            <person name="Blattner F.R."/>
            <person name="Plunkett G. III"/>
            <person name="Bloch C.A."/>
            <person name="Perna N.T."/>
            <person name="Burland V."/>
            <person name="Riley M."/>
            <person name="Collado-Vides J."/>
            <person name="Glasner J.D."/>
            <person name="Rode C.K."/>
            <person name="Mayhew G.F."/>
            <person name="Gregor J."/>
            <person name="Davis N.W."/>
            <person name="Kirkpatrick H.A."/>
            <person name="Goeden M.A."/>
            <person name="Rose D.J."/>
            <person name="Mau B."/>
            <person name="Shao Y."/>
        </authorList>
    </citation>
    <scope>NUCLEOTIDE SEQUENCE [LARGE SCALE GENOMIC DNA]</scope>
    <source>
        <strain>K12 / MG1655 / ATCC 47076</strain>
    </source>
</reference>
<reference key="3">
    <citation type="journal article" date="2006" name="Mol. Syst. Biol.">
        <title>Highly accurate genome sequences of Escherichia coli K-12 strains MG1655 and W3110.</title>
        <authorList>
            <person name="Hayashi K."/>
            <person name="Morooka N."/>
            <person name="Yamamoto Y."/>
            <person name="Fujita K."/>
            <person name="Isono K."/>
            <person name="Choi S."/>
            <person name="Ohtsubo E."/>
            <person name="Baba T."/>
            <person name="Wanner B.L."/>
            <person name="Mori H."/>
            <person name="Horiuchi T."/>
        </authorList>
    </citation>
    <scope>NUCLEOTIDE SEQUENCE [LARGE SCALE GENOMIC DNA]</scope>
    <source>
        <strain>K12 / W3110 / ATCC 27325 / DSM 5911</strain>
    </source>
</reference>
<reference key="4">
    <citation type="journal article" date="2006" name="Biochem. J.">
        <title>Identification of a novel NADH-specific aldo-keto reductase using sequence and structural homologies.</title>
        <authorList>
            <person name="Di Luccio E."/>
            <person name="Elling R.A."/>
            <person name="Wilson D.K."/>
        </authorList>
    </citation>
    <scope>FUNCTION</scope>
    <scope>CATALYTIC ACTIVITY</scope>
    <scope>BIOPHYSICOCHEMICAL PROPERTIES</scope>
    <scope>SUBSTRATE SPECIFICITY</scope>
    <scope>SUBUNIT</scope>
    <scope>MUTAGENESIS OF ASP-232</scope>
    <scope>3D-STRUCTURE MODELING</scope>
</reference>
<reference key="5">
    <citation type="journal article" date="2010" name="Appl. Environ. Microbiol.">
        <title>Requirement of purine and pyrimidine synthesis for colonization of the mouse intestine by Escherichia coli.</title>
        <authorList>
            <person name="Vogel-Scheel J."/>
            <person name="Alpert C."/>
            <person name="Engst W."/>
            <person name="Loh G."/>
            <person name="Blaut M."/>
        </authorList>
    </citation>
    <scope>FUNCTION</scope>
    <scope>DISRUPTION PHENOTYPE</scope>
    <scope>INDUCTION</scope>
    <source>
        <strain>K12 / MG1655 / ATCC 47076</strain>
    </source>
</reference>
<reference key="6">
    <citation type="journal article" date="2011" name="Microb. Cell Fact.">
        <title>Dehydratase mediated 1-propanol production in metabolically engineered Escherichia coli.</title>
        <authorList>
            <person name="Jain R."/>
            <person name="Yan Y."/>
        </authorList>
    </citation>
    <scope>BIOTECHNOLOGY</scope>
</reference>
<protein>
    <recommendedName>
        <fullName evidence="5">NADH-specific methylglyoxal reductase</fullName>
        <ecNumber evidence="2">1.1.1.-</ecNumber>
    </recommendedName>
    <alternativeName>
        <fullName evidence="5">AKR11B2</fullName>
    </alternativeName>
</protein>
<name>AKRMG_ECOLI</name>
<accession>P77256</accession>
<comment type="function">
    <text evidence="2 3">Catalyzes the NADH-dependent reduction of methylglyoxal (2-oxopropanal) in vitro (PubMed:16813561). It is not known if this activity has physiological significance (PubMed:16813561). Cannot use NADPH as a cosubstrate (PubMed:16813561). Seems to play some role in intestinal colonization (PubMed:20562286).</text>
</comment>
<comment type="catalytic activity">
    <reaction evidence="2">
        <text>hydroxyacetone + NAD(+) = methylglyoxal + NADH + H(+)</text>
        <dbReference type="Rhea" id="RHEA:35615"/>
        <dbReference type="ChEBI" id="CHEBI:15378"/>
        <dbReference type="ChEBI" id="CHEBI:17158"/>
        <dbReference type="ChEBI" id="CHEBI:27957"/>
        <dbReference type="ChEBI" id="CHEBI:57540"/>
        <dbReference type="ChEBI" id="CHEBI:57945"/>
    </reaction>
</comment>
<comment type="biophysicochemical properties">
    <kinetics>
        <KM evidence="2">52 uM for NADH</KM>
        <KM evidence="2">1.81 mM for methylglyoxal</KM>
        <KM evidence="2">363 mM for DL-glyceraldehyde</KM>
        <text evidence="2">kcat is 15.7 sec(-1) with methylglyoxal as substrate. kcat is 2 sec(-1) with DL-glyceraldehyde as substrate.</text>
    </kinetics>
</comment>
<comment type="subunit">
    <text evidence="2">Monomer.</text>
</comment>
<comment type="induction">
    <text evidence="3">Is 3.5-fold up-regulated in vivo in intestinal environment compared to the level for in vitro cultures.</text>
</comment>
<comment type="disruption phenotype">
    <text evidence="3">Deletion of this gene affects intestinal colonization by E.coli, since a deletion mutant reaches a 1.2-log-lower cecal concentration than the wild-type.</text>
</comment>
<comment type="biotechnology">
    <text evidence="4">Can be used in an engineered metabolic pathway for 1,2-propanediol and 1-propanol production. 1-propanol is a potential fuel substitute to petroleum.</text>
</comment>
<comment type="similarity">
    <text evidence="6">Belongs to the aldo/keto reductase family. Aldo/keto reductase 11 subfamily.</text>
</comment>
<proteinExistence type="evidence at protein level"/>
<sequence>MKKIPLGTTDITLSRMGLGTWAIGGGPAWNGDLDRQICIDTILEAHRCGINLIDTAPGYNFGNSEVIVGQALKKLPREQVVVETKCGIVWERKGSLFNKVGDRQLYKNLSPESIREEVAASLQRLGIDYIDIYMTHWQSVPPFFTPIAETVAVLNELKSEGKIRAIGAANVDADHIREYLQYGELDIIQAKYSILDRAMENELLPLCRDNGIVVQVYSPLEQGLLTGTITRDYVPGGARANKVWFQRENMLKVIDMLEQWQPLCARYQCTIPTLALAWILKQSDLISILSGATAPEQVRENVAALNINLSDADATLMREMAEALER</sequence>